<organism>
    <name type="scientific">Trifolium incarnatum</name>
    <name type="common">Crimson clover</name>
    <dbReference type="NCBI Taxonomy" id="60916"/>
    <lineage>
        <taxon>Eukaryota</taxon>
        <taxon>Viridiplantae</taxon>
        <taxon>Streptophyta</taxon>
        <taxon>Embryophyta</taxon>
        <taxon>Tracheophyta</taxon>
        <taxon>Spermatophyta</taxon>
        <taxon>Magnoliopsida</taxon>
        <taxon>eudicotyledons</taxon>
        <taxon>Gunneridae</taxon>
        <taxon>Pentapetalae</taxon>
        <taxon>rosids</taxon>
        <taxon>fabids</taxon>
        <taxon>Fabales</taxon>
        <taxon>Fabaceae</taxon>
        <taxon>Papilionoideae</taxon>
        <taxon>50 kb inversion clade</taxon>
        <taxon>NPAAA clade</taxon>
        <taxon>Hologalegina</taxon>
        <taxon>IRL clade</taxon>
        <taxon>Trifolieae</taxon>
        <taxon>Trifolium</taxon>
    </lineage>
</organism>
<geneLocation type="chloroplast"/>
<evidence type="ECO:0000255" key="1">
    <source>
        <dbReference type="HAMAP-Rule" id="MF_01390"/>
    </source>
</evidence>
<name>MATK_TRIIC</name>
<dbReference type="EMBL" id="AF522126">
    <property type="protein sequence ID" value="AAM82118.1"/>
    <property type="molecule type" value="Genomic_DNA"/>
</dbReference>
<dbReference type="GO" id="GO:0009507">
    <property type="term" value="C:chloroplast"/>
    <property type="evidence" value="ECO:0007669"/>
    <property type="project" value="UniProtKB-SubCell"/>
</dbReference>
<dbReference type="GO" id="GO:0003723">
    <property type="term" value="F:RNA binding"/>
    <property type="evidence" value="ECO:0007669"/>
    <property type="project" value="UniProtKB-KW"/>
</dbReference>
<dbReference type="GO" id="GO:0006397">
    <property type="term" value="P:mRNA processing"/>
    <property type="evidence" value="ECO:0007669"/>
    <property type="project" value="UniProtKB-KW"/>
</dbReference>
<dbReference type="GO" id="GO:0008380">
    <property type="term" value="P:RNA splicing"/>
    <property type="evidence" value="ECO:0007669"/>
    <property type="project" value="UniProtKB-UniRule"/>
</dbReference>
<dbReference type="GO" id="GO:0008033">
    <property type="term" value="P:tRNA processing"/>
    <property type="evidence" value="ECO:0007669"/>
    <property type="project" value="UniProtKB-KW"/>
</dbReference>
<dbReference type="HAMAP" id="MF_01390">
    <property type="entry name" value="MatK"/>
    <property type="match status" value="1"/>
</dbReference>
<dbReference type="InterPro" id="IPR024937">
    <property type="entry name" value="Domain_X"/>
</dbReference>
<dbReference type="InterPro" id="IPR002866">
    <property type="entry name" value="Maturase_MatK"/>
</dbReference>
<dbReference type="InterPro" id="IPR024942">
    <property type="entry name" value="Maturase_MatK_N"/>
</dbReference>
<dbReference type="PANTHER" id="PTHR34811">
    <property type="entry name" value="MATURASE K"/>
    <property type="match status" value="1"/>
</dbReference>
<dbReference type="PANTHER" id="PTHR34811:SF1">
    <property type="entry name" value="MATURASE K"/>
    <property type="match status" value="1"/>
</dbReference>
<dbReference type="Pfam" id="PF01348">
    <property type="entry name" value="Intron_maturas2"/>
    <property type="match status" value="1"/>
</dbReference>
<dbReference type="Pfam" id="PF01824">
    <property type="entry name" value="MatK_N"/>
    <property type="match status" value="1"/>
</dbReference>
<sequence>MKEYQVYLERARSRQQDFLYPLIFREYIYGLAYSHNWSRSIFLENGGYDNKYSLLNVKRLITRMYQQNHLIISANDSPKNGFWGYNKNFDSQIISEGFAIVVEIPFFLQLSSSLEKAEIIKSYKNVRSIHSIFPFLEDKFTYLNYVSDIRIPYPIHLEILVQILRYWVKDAPFFHLLRLFLYHFSNWNGFITTKKSISTFSKSNPRLFLFLYNFYVCEYESIFLFLRNKSSHLRLKSFSVFLERIFFYAKREHLVEVFAKDFSYPLPFFKDPNIHYVRYQGKCILASKNVPFLMNKWKHYFIHLWQCFFDVWSQPRTININQLSEHSFQLLGYFSNVRLNRSVVRSQMLQNTFLIEIVSKKLDIIVPIIPLIRSLAKAKFCNVLGHPISKPVRADSSDFDIIERFLRICRNLSHYYNGSSKKKNLYRIKYILRLSCIKTLACKHKSTVRAFLKRSGSEELLEEFFTEEEEILSLIFPRDSFTLHRFYRNRIWYLDILFSNDLVNDE</sequence>
<keyword id="KW-0150">Chloroplast</keyword>
<keyword id="KW-0507">mRNA processing</keyword>
<keyword id="KW-0934">Plastid</keyword>
<keyword id="KW-0694">RNA-binding</keyword>
<keyword id="KW-0819">tRNA processing</keyword>
<feature type="chain" id="PRO_0000143748" description="Maturase K">
    <location>
        <begin position="1"/>
        <end position="506"/>
    </location>
</feature>
<gene>
    <name evidence="1" type="primary">matK</name>
</gene>
<proteinExistence type="inferred from homology"/>
<comment type="function">
    <text evidence="1">Usually encoded in the trnK tRNA gene intron. Probably assists in splicing its own and other chloroplast group II introns.</text>
</comment>
<comment type="subcellular location">
    <subcellularLocation>
        <location>Plastid</location>
        <location>Chloroplast</location>
    </subcellularLocation>
</comment>
<comment type="similarity">
    <text evidence="1">Belongs to the intron maturase 2 family. MatK subfamily.</text>
</comment>
<accession>Q8MCM9</accession>
<reference key="1">
    <citation type="book" date="2003" name="Advances in legume systematics - part 10">
        <title>Phylogenetic analyses of tribes Trifolieae and Vicieae based on sequences of the plastid gene matK (Papilionoideae: Leguminosae).</title>
        <editorList>
            <person name="Klitgaard B.B."/>
            <person name="Bruneau A."/>
        </editorList>
        <authorList>
            <person name="Steele K.P."/>
            <person name="Wojciechowski M.F."/>
        </authorList>
    </citation>
    <scope>NUCLEOTIDE SEQUENCE [GENOMIC DNA]</scope>
</reference>
<protein>
    <recommendedName>
        <fullName evidence="1">Maturase K</fullName>
    </recommendedName>
    <alternativeName>
        <fullName evidence="1">Intron maturase</fullName>
    </alternativeName>
</protein>